<evidence type="ECO:0000250" key="1">
    <source>
        <dbReference type="UniProtKB" id="Q9WUH5"/>
    </source>
</evidence>
<evidence type="ECO:0000255" key="2"/>
<evidence type="ECO:0000255" key="3">
    <source>
        <dbReference type="PROSITE-ProRule" id="PRU00024"/>
    </source>
</evidence>
<evidence type="ECO:0000255" key="4">
    <source>
        <dbReference type="PROSITE-ProRule" id="PRU00175"/>
    </source>
</evidence>
<evidence type="ECO:0000255" key="5">
    <source>
        <dbReference type="PROSITE-ProRule" id="PRU00548"/>
    </source>
</evidence>
<evidence type="ECO:0000269" key="6">
    <source>
    </source>
</evidence>
<evidence type="ECO:0000269" key="7">
    <source>
    </source>
</evidence>
<evidence type="ECO:0000303" key="8">
    <source>
    </source>
</evidence>
<evidence type="ECO:0000303" key="9">
    <source>
    </source>
</evidence>
<evidence type="ECO:0000305" key="10"/>
<evidence type="ECO:0007829" key="11">
    <source>
        <dbReference type="PDB" id="7QS0"/>
    </source>
</evidence>
<sequence length="481" mass="55037">MASAASVTSLADEVNCPICQGTLREPVTIDCGHNFCRACLTRYCEIPGPDLEESPTCPLCKEPFRPGSFRPNWQLANVVENIERLQLVSTLGLGEEDVCQEHGEKIYFFCEDDEMQLCVVCREAGEHATHTMRFLEDAAAPYREQIHKCLKCLRKEREEIQEIQSRENKRMQVLLTQVSTKRQQVISEFAHLRKFLEEQQSILLAQLESQDGDILRQRDEFDLLVAGEICRFSALIEELEEKNERPARELLTDIRSTLIRCETRKCRKPVAVSPELGQRIRDFPQQALPLQREMKMFLEKLCFELDYEPAHISLDPQTSHPKLLLSEDHQRAQFSYKWQNSPDNPQRFDRATCVLAHTGITGGRHTWVVSIDLAHGGSCTVGVVSEDVQRKGELRLRPEEGVWAVRLAWGFVSALGSFPTRLTLKEQPRQVRVSLDYEVGWVTFTNAVTREPIYTFTASFTRKVIPFFGLWGRGSSFSLSS</sequence>
<name>TRI10_HUMAN</name>
<protein>
    <recommendedName>
        <fullName>Tripartite motif-containing protein 10</fullName>
    </recommendedName>
    <alternativeName>
        <fullName>B30-RING finger protein</fullName>
    </alternativeName>
    <alternativeName>
        <fullName>RING finger protein 9</fullName>
    </alternativeName>
</protein>
<gene>
    <name type="primary">TRIM10</name>
    <name type="synonym">RFB30</name>
    <name type="synonym">RNF9</name>
</gene>
<organism>
    <name type="scientific">Homo sapiens</name>
    <name type="common">Human</name>
    <dbReference type="NCBI Taxonomy" id="9606"/>
    <lineage>
        <taxon>Eukaryota</taxon>
        <taxon>Metazoa</taxon>
        <taxon>Chordata</taxon>
        <taxon>Craniata</taxon>
        <taxon>Vertebrata</taxon>
        <taxon>Euteleostomi</taxon>
        <taxon>Mammalia</taxon>
        <taxon>Eutheria</taxon>
        <taxon>Euarchontoglires</taxon>
        <taxon>Primates</taxon>
        <taxon>Haplorrhini</taxon>
        <taxon>Catarrhini</taxon>
        <taxon>Hominidae</taxon>
        <taxon>Homo</taxon>
    </lineage>
</organism>
<feature type="chain" id="PRO_0000056211" description="Tripartite motif-containing protein 10">
    <location>
        <begin position="1"/>
        <end position="481"/>
    </location>
</feature>
<feature type="domain" description="B30.2/SPRY" evidence="5">
    <location>
        <begin position="292"/>
        <end position="481"/>
    </location>
</feature>
<feature type="zinc finger region" description="RING-type" evidence="4">
    <location>
        <begin position="16"/>
        <end position="61"/>
    </location>
</feature>
<feature type="zinc finger region" description="B box-type" evidence="3">
    <location>
        <begin position="94"/>
        <end position="135"/>
    </location>
</feature>
<feature type="coiled-coil region" evidence="2">
    <location>
        <begin position="150"/>
        <end position="177"/>
    </location>
</feature>
<feature type="binding site" evidence="3">
    <location>
        <position position="99"/>
    </location>
    <ligand>
        <name>Zn(2+)</name>
        <dbReference type="ChEBI" id="CHEBI:29105"/>
    </ligand>
</feature>
<feature type="binding site" evidence="3">
    <location>
        <position position="102"/>
    </location>
    <ligand>
        <name>Zn(2+)</name>
        <dbReference type="ChEBI" id="CHEBI:29105"/>
    </ligand>
</feature>
<feature type="binding site" evidence="3">
    <location>
        <position position="121"/>
    </location>
    <ligand>
        <name>Zn(2+)</name>
        <dbReference type="ChEBI" id="CHEBI:29105"/>
    </ligand>
</feature>
<feature type="binding site" evidence="3">
    <location>
        <position position="127"/>
    </location>
    <ligand>
        <name>Zn(2+)</name>
        <dbReference type="ChEBI" id="CHEBI:29105"/>
    </ligand>
</feature>
<feature type="splice variant" id="VSP_005748" description="In isoform Beta." evidence="8 9">
    <original>VSIDLAHGGSCTVGVVSEDVQRKGELRLRPEEGVWAVRLAWGFVSALGSFPTRLTLKEQPRQVRVSLDYEVGWVTFTNAVTREPIYTFTASFTRKVIPFFGLWGRGSSFSLSS</original>
    <variation>WMARVPGDSGCCQFCSPPSVLGTEVAA</variation>
    <location>
        <begin position="369"/>
        <end position="481"/>
    </location>
</feature>
<feature type="sequence variant" id="VAR_052127" description="In dbSNP:rs12212092.">
    <original>R</original>
    <variation>H</variation>
    <location>
        <position position="65"/>
    </location>
</feature>
<feature type="sequence variant" id="VAR_052128" description="In dbSNP:rs17194446.">
    <original>V</original>
    <variation>M</variation>
    <location>
        <position position="119"/>
    </location>
</feature>
<feature type="sequence conflict" description="In Ref. 1; CAB52384." evidence="10" ref="1">
    <original>E</original>
    <variation>G</variation>
    <location>
        <position position="104"/>
    </location>
</feature>
<feature type="sequence conflict" description="In Ref. 2; AAG53495/AAG53496." evidence="10" ref="2">
    <original>E</original>
    <variation>SR</variation>
    <location>
        <position position="104"/>
    </location>
</feature>
<feature type="sequence conflict" description="In Ref. 2; AAG53495/AAG53496." evidence="10" ref="2">
    <original>E</original>
    <variation>K</variation>
    <location>
        <position position="167"/>
    </location>
</feature>
<feature type="sequence conflict" description="In Ref. 1; CAB52384 and 2; AAG53495." evidence="10" ref="1 2">
    <original>Y</original>
    <variation>S</variation>
    <location>
        <position position="336"/>
    </location>
</feature>
<feature type="sequence conflict" description="In Ref. 1; CAB52384 and 2; AAG53495." evidence="10" ref="1 2">
    <original>G</original>
    <variation>A</variation>
    <location>
        <position position="377"/>
    </location>
</feature>
<feature type="turn" evidence="11">
    <location>
        <begin position="316"/>
        <end position="318"/>
    </location>
</feature>
<feature type="strand" evidence="11">
    <location>
        <begin position="323"/>
        <end position="325"/>
    </location>
</feature>
<feature type="strand" evidence="11">
    <location>
        <begin position="329"/>
        <end position="334"/>
    </location>
</feature>
<feature type="strand" evidence="11">
    <location>
        <begin position="349"/>
        <end position="351"/>
    </location>
</feature>
<feature type="strand" evidence="11">
    <location>
        <begin position="353"/>
        <end position="358"/>
    </location>
</feature>
<feature type="strand" evidence="11">
    <location>
        <begin position="362"/>
        <end position="376"/>
    </location>
</feature>
<feature type="strand" evidence="11">
    <location>
        <begin position="378"/>
        <end position="385"/>
    </location>
</feature>
<feature type="helix" evidence="11">
    <location>
        <begin position="398"/>
        <end position="400"/>
    </location>
</feature>
<feature type="strand" evidence="11">
    <location>
        <begin position="402"/>
        <end position="408"/>
    </location>
</feature>
<feature type="strand" evidence="11">
    <location>
        <begin position="411"/>
        <end position="414"/>
    </location>
</feature>
<feature type="strand" evidence="11">
    <location>
        <begin position="416"/>
        <end position="418"/>
    </location>
</feature>
<feature type="strand" evidence="11">
    <location>
        <begin position="420"/>
        <end position="422"/>
    </location>
</feature>
<feature type="strand" evidence="11">
    <location>
        <begin position="429"/>
        <end position="436"/>
    </location>
</feature>
<feature type="turn" evidence="11">
    <location>
        <begin position="437"/>
        <end position="440"/>
    </location>
</feature>
<feature type="strand" evidence="11">
    <location>
        <begin position="441"/>
        <end position="446"/>
    </location>
</feature>
<feature type="turn" evidence="11">
    <location>
        <begin position="447"/>
        <end position="449"/>
    </location>
</feature>
<feature type="strand" evidence="11">
    <location>
        <begin position="452"/>
        <end position="457"/>
    </location>
</feature>
<feature type="strand" evidence="11">
    <location>
        <begin position="464"/>
        <end position="472"/>
    </location>
</feature>
<feature type="strand" evidence="11">
    <location>
        <begin position="475"/>
        <end position="480"/>
    </location>
</feature>
<feature type="sequence conflict" description="In Ref. 2; AAG53496." evidence="10" ref="2">
    <original>C</original>
    <variation>G</variation>
    <location sequence="Q9UDY6-2">
        <position position="379"/>
    </location>
</feature>
<keyword id="KW-0002">3D-structure</keyword>
<keyword id="KW-0025">Alternative splicing</keyword>
<keyword id="KW-0175">Coiled coil</keyword>
<keyword id="KW-0963">Cytoplasm</keyword>
<keyword id="KW-0479">Metal-binding</keyword>
<keyword id="KW-1267">Proteomics identification</keyword>
<keyword id="KW-1185">Reference proteome</keyword>
<keyword id="KW-0862">Zinc</keyword>
<keyword id="KW-0863">Zinc-finger</keyword>
<accession>Q9UDY6</accession>
<accession>A6NF84</accession>
<accession>Q5SRJ5</accession>
<accession>Q5SRK8</accession>
<accession>Q86Z08</accession>
<accession>Q96QB6</accession>
<accession>Q9C023</accession>
<accession>Q9C024</accession>
<proteinExistence type="evidence at protein level"/>
<comment type="function">
    <text evidence="1 7">E3 ligase that plays an essential role in the differentiation and survival of terminal erythroid cells. May directly bind to PTEN and promote its ubiquitination, resulting in its proteasomal degradation and activation of hypertrophic signaling (By similarity). In addition, plays a role in immune response regulation by repressing the phosphorylation of STAT1 and STAT2 in the interferon/JAK/STAT signaling pathway independent of its E3 ligase activity. Mechanistically, interacts with the intracellular domain of IFNAR1 and thereby inhibits the association between TYK2 and IFNAR1 (PubMed:33811647).</text>
</comment>
<comment type="subunit">
    <text evidence="7">Interacts with IFNAR1; this interaction prevents association of IFNAR1 with TYK2.</text>
</comment>
<comment type="interaction">
    <interactant intactId="EBI-6427325">
        <id>Q9UDY6</id>
    </interactant>
    <interactant intactId="EBI-359352">
        <id>P25786</id>
        <label>PSMA1</label>
    </interactant>
    <organismsDiffer>false</organismsDiffer>
    <experiments>4</experiments>
</comment>
<comment type="interaction">
    <interactant intactId="EBI-6427325">
        <id>Q9UDY6</id>
    </interactant>
    <interactant intactId="EBI-6447954">
        <id>Q5W5X9</id>
        <label>TTC23</label>
    </interactant>
    <organismsDiffer>false</organismsDiffer>
    <experiments>4</experiments>
</comment>
<comment type="interaction">
    <interactant intactId="EBI-6427325">
        <id>Q9UDY6</id>
    </interactant>
    <interactant intactId="EBI-2688184">
        <id>Q9UQR1</id>
        <label>ZNF148</label>
    </interactant>
    <organismsDiffer>false</organismsDiffer>
    <experiments>3</experiments>
</comment>
<comment type="interaction">
    <interactant intactId="EBI-11981577">
        <id>Q9UDY6-2</id>
    </interactant>
    <interactant intactId="EBI-744104">
        <id>P55040</id>
        <label>GEM</label>
    </interactant>
    <organismsDiffer>false</organismsDiffer>
    <experiments>3</experiments>
</comment>
<comment type="interaction">
    <interactant intactId="EBI-11981577">
        <id>Q9UDY6-2</id>
    </interactant>
    <interactant intactId="EBI-740220">
        <id>O14964</id>
        <label>HGS</label>
    </interactant>
    <organismsDiffer>false</organismsDiffer>
    <experiments>3</experiments>
</comment>
<comment type="interaction">
    <interactant intactId="EBI-11981577">
        <id>Q9UDY6-2</id>
    </interactant>
    <interactant intactId="EBI-739832">
        <id>Q8TBB1</id>
        <label>LNX1</label>
    </interactant>
    <organismsDiffer>false</organismsDiffer>
    <experiments>3</experiments>
</comment>
<comment type="interaction">
    <interactant intactId="EBI-11981577">
        <id>Q9UDY6-2</id>
    </interactant>
    <interactant intactId="EBI-748391">
        <id>Q9BWG6</id>
        <label>SCNM1</label>
    </interactant>
    <organismsDiffer>false</organismsDiffer>
    <experiments>3</experiments>
</comment>
<comment type="interaction">
    <interactant intactId="EBI-11981577">
        <id>Q9UDY6-2</id>
    </interactant>
    <interactant intactId="EBI-17716262">
        <id>Q9UPQ4-2</id>
        <label>TRIM35</label>
    </interactant>
    <organismsDiffer>false</organismsDiffer>
    <experiments>3</experiments>
</comment>
<comment type="interaction">
    <interactant intactId="EBI-11981577">
        <id>Q9UDY6-2</id>
    </interactant>
    <interactant intactId="EBI-8787399">
        <id>Q96DX7</id>
        <label>TRIM44</label>
    </interactant>
    <organismsDiffer>false</organismsDiffer>
    <experiments>4</experiments>
</comment>
<comment type="interaction">
    <interactant intactId="EBI-11981577">
        <id>Q9UDY6-2</id>
    </interactant>
    <interactant intactId="EBI-744257">
        <id>Q96IQ9</id>
        <label>ZNF414</label>
    </interactant>
    <organismsDiffer>false</organismsDiffer>
    <experiments>3</experiments>
</comment>
<comment type="interaction">
    <interactant intactId="EBI-11981577">
        <id>Q9UDY6-2</id>
    </interactant>
    <interactant intactId="EBI-4395669">
        <id>Q6ZNG0</id>
        <label>ZNF620</label>
    </interactant>
    <organismsDiffer>false</organismsDiffer>
    <experiments>3</experiments>
</comment>
<comment type="subcellular location">
    <subcellularLocation>
        <location evidence="6 7">Cytoplasm</location>
    </subcellularLocation>
</comment>
<comment type="alternative products">
    <event type="alternative splicing"/>
    <isoform>
        <id>Q9UDY6-1</id>
        <name>Alpha</name>
        <sequence type="displayed"/>
    </isoform>
    <isoform>
        <id>Q9UDY6-2</id>
        <name>Beta</name>
        <sequence type="described" ref="VSP_005748"/>
    </isoform>
</comment>
<comment type="similarity">
    <text evidence="10">Belongs to the TRIM/RBCC family.</text>
</comment>
<dbReference type="EMBL" id="Y07829">
    <property type="protein sequence ID" value="CAB52384.1"/>
    <property type="molecule type" value="Genomic_DNA"/>
</dbReference>
<dbReference type="EMBL" id="AF220122">
    <property type="protein sequence ID" value="AAG53495.1"/>
    <property type="molecule type" value="mRNA"/>
</dbReference>
<dbReference type="EMBL" id="AF220123">
    <property type="protein sequence ID" value="AAG53496.1"/>
    <property type="molecule type" value="mRNA"/>
</dbReference>
<dbReference type="EMBL" id="AB202085">
    <property type="protein sequence ID" value="BAE78605.1"/>
    <property type="molecule type" value="Genomic_DNA"/>
</dbReference>
<dbReference type="EMBL" id="AB103595">
    <property type="protein sequence ID" value="BAF31256.1"/>
    <property type="molecule type" value="Genomic_DNA"/>
</dbReference>
<dbReference type="EMBL" id="BA000025">
    <property type="protein sequence ID" value="BAB63332.1"/>
    <property type="molecule type" value="Genomic_DNA"/>
</dbReference>
<dbReference type="EMBL" id="AB088089">
    <property type="protein sequence ID" value="BAC54921.1"/>
    <property type="molecule type" value="Genomic_DNA"/>
</dbReference>
<dbReference type="EMBL" id="AL669914">
    <property type="status" value="NOT_ANNOTATED_CDS"/>
    <property type="molecule type" value="Genomic_DNA"/>
</dbReference>
<dbReference type="EMBL" id="AL671859">
    <property type="status" value="NOT_ANNOTATED_CDS"/>
    <property type="molecule type" value="Genomic_DNA"/>
</dbReference>
<dbReference type="EMBL" id="AL844220">
    <property type="status" value="NOT_ANNOTATED_CDS"/>
    <property type="molecule type" value="Genomic_DNA"/>
</dbReference>
<dbReference type="EMBL" id="BX005441">
    <property type="status" value="NOT_ANNOTATED_CDS"/>
    <property type="molecule type" value="Genomic_DNA"/>
</dbReference>
<dbReference type="EMBL" id="BX927221">
    <property type="status" value="NOT_ANNOTATED_CDS"/>
    <property type="molecule type" value="Genomic_DNA"/>
</dbReference>
<dbReference type="EMBL" id="CR753815">
    <property type="status" value="NOT_ANNOTATED_CDS"/>
    <property type="molecule type" value="Genomic_DNA"/>
</dbReference>
<dbReference type="EMBL" id="CR759838">
    <property type="status" value="NOT_ANNOTATED_CDS"/>
    <property type="molecule type" value="Genomic_DNA"/>
</dbReference>
<dbReference type="EMBL" id="CR788282">
    <property type="status" value="NOT_ANNOTATED_CDS"/>
    <property type="molecule type" value="Genomic_DNA"/>
</dbReference>
<dbReference type="EMBL" id="CH471081">
    <property type="protein sequence ID" value="EAX03268.1"/>
    <property type="molecule type" value="Genomic_DNA"/>
</dbReference>
<dbReference type="EMBL" id="CH471081">
    <property type="protein sequence ID" value="EAX03269.1"/>
    <property type="molecule type" value="Genomic_DNA"/>
</dbReference>
<dbReference type="EMBL" id="BC093926">
    <property type="protein sequence ID" value="AAH93926.1"/>
    <property type="molecule type" value="mRNA"/>
</dbReference>
<dbReference type="EMBL" id="BC113419">
    <property type="protein sequence ID" value="AAI13420.1"/>
    <property type="molecule type" value="mRNA"/>
</dbReference>
<dbReference type="CCDS" id="CCDS34375.1">
    <molecule id="Q9UDY6-1"/>
</dbReference>
<dbReference type="CCDS" id="CCDS4676.1">
    <molecule id="Q9UDY6-2"/>
</dbReference>
<dbReference type="RefSeq" id="NP_006769.2">
    <molecule id="Q9UDY6-1"/>
    <property type="nucleotide sequence ID" value="NM_006778.4"/>
</dbReference>
<dbReference type="RefSeq" id="NP_439893.2">
    <molecule id="Q9UDY6-2"/>
    <property type="nucleotide sequence ID" value="NM_052828.3"/>
</dbReference>
<dbReference type="RefSeq" id="XP_054184414.1">
    <molecule id="Q9UDY6-1"/>
    <property type="nucleotide sequence ID" value="XM_054328439.1"/>
</dbReference>
<dbReference type="RefSeq" id="XP_054184415.1">
    <molecule id="Q9UDY6-1"/>
    <property type="nucleotide sequence ID" value="XM_054328440.1"/>
</dbReference>
<dbReference type="RefSeq" id="XP_054184417.1">
    <molecule id="Q9UDY6-2"/>
    <property type="nucleotide sequence ID" value="XM_054328442.1"/>
</dbReference>
<dbReference type="RefSeq" id="XP_054185691.1">
    <molecule id="Q9UDY6-1"/>
    <property type="nucleotide sequence ID" value="XM_054329716.1"/>
</dbReference>
<dbReference type="RefSeq" id="XP_054185692.1">
    <molecule id="Q9UDY6-1"/>
    <property type="nucleotide sequence ID" value="XM_054329717.1"/>
</dbReference>
<dbReference type="RefSeq" id="XP_054185693.1">
    <molecule id="Q9UDY6-1"/>
    <property type="nucleotide sequence ID" value="XM_054329718.1"/>
</dbReference>
<dbReference type="RefSeq" id="XP_054186186.1">
    <molecule id="Q9UDY6-1"/>
    <property type="nucleotide sequence ID" value="XM_054330211.1"/>
</dbReference>
<dbReference type="RefSeq" id="XP_054186187.1">
    <molecule id="Q9UDY6-1"/>
    <property type="nucleotide sequence ID" value="XM_054330212.1"/>
</dbReference>
<dbReference type="RefSeq" id="XP_054186189.1">
    <molecule id="Q9UDY6-2"/>
    <property type="nucleotide sequence ID" value="XM_054330214.1"/>
</dbReference>
<dbReference type="RefSeq" id="XP_054186481.1">
    <molecule id="Q9UDY6-1"/>
    <property type="nucleotide sequence ID" value="XM_054330506.1"/>
</dbReference>
<dbReference type="RefSeq" id="XP_054186482.1">
    <molecule id="Q9UDY6-1"/>
    <property type="nucleotide sequence ID" value="XM_054330507.1"/>
</dbReference>
<dbReference type="RefSeq" id="XP_054186731.1">
    <molecule id="Q9UDY6-1"/>
    <property type="nucleotide sequence ID" value="XM_054330756.1"/>
</dbReference>
<dbReference type="RefSeq" id="XP_054186960.1">
    <molecule id="Q9UDY6-1"/>
    <property type="nucleotide sequence ID" value="XM_054330985.1"/>
</dbReference>
<dbReference type="RefSeq" id="XP_054186961.1">
    <molecule id="Q9UDY6-1"/>
    <property type="nucleotide sequence ID" value="XM_054330986.1"/>
</dbReference>
<dbReference type="RefSeq" id="XP_054186963.1">
    <molecule id="Q9UDY6-2"/>
    <property type="nucleotide sequence ID" value="XM_054330988.1"/>
</dbReference>
<dbReference type="RefSeq" id="XP_054209971.1">
    <molecule id="Q9UDY6-1"/>
    <property type="nucleotide sequence ID" value="XM_054353996.1"/>
</dbReference>
<dbReference type="RefSeq" id="XP_054209972.1">
    <molecule id="Q9UDY6-1"/>
    <property type="nucleotide sequence ID" value="XM_054353997.1"/>
</dbReference>
<dbReference type="RefSeq" id="XP_054209974.1">
    <molecule id="Q9UDY6-2"/>
    <property type="nucleotide sequence ID" value="XM_054353999.1"/>
</dbReference>
<dbReference type="PDB" id="7QS0">
    <property type="method" value="X-ray"/>
    <property type="resolution" value="2.30 A"/>
    <property type="chains" value="A/B/C=304-481"/>
</dbReference>
<dbReference type="PDBsum" id="7QS0"/>
<dbReference type="SMR" id="Q9UDY6"/>
<dbReference type="BioGRID" id="115413">
    <property type="interactions" value="54"/>
</dbReference>
<dbReference type="FunCoup" id="Q9UDY6">
    <property type="interactions" value="13"/>
</dbReference>
<dbReference type="IntAct" id="Q9UDY6">
    <property type="interactions" value="37"/>
</dbReference>
<dbReference type="STRING" id="9606.ENSP00000397073"/>
<dbReference type="PhosphoSitePlus" id="Q9UDY6"/>
<dbReference type="BioMuta" id="TRIM10"/>
<dbReference type="DMDM" id="50403805"/>
<dbReference type="jPOST" id="Q9UDY6"/>
<dbReference type="MassIVE" id="Q9UDY6"/>
<dbReference type="PaxDb" id="9606-ENSP00000397073"/>
<dbReference type="PeptideAtlas" id="Q9UDY6"/>
<dbReference type="ProteomicsDB" id="84134">
    <molecule id="Q9UDY6-1"/>
</dbReference>
<dbReference type="ProteomicsDB" id="84135">
    <molecule id="Q9UDY6-2"/>
</dbReference>
<dbReference type="Antibodypedia" id="26232">
    <property type="antibodies" value="170 antibodies from 19 providers"/>
</dbReference>
<dbReference type="DNASU" id="10107"/>
<dbReference type="Ensembl" id="ENST00000259941.6">
    <molecule id="Q9UDY6-2"/>
    <property type="protein sequence ID" value="ENSP00000259941.6"/>
    <property type="gene ID" value="ENSG00000137394.14"/>
</dbReference>
<dbReference type="Ensembl" id="ENST00000354038.10">
    <molecule id="Q9UDY6-1"/>
    <property type="protein sequence ID" value="ENSP00000343695.6"/>
    <property type="gene ID" value="ENSG00000137394.14"/>
</dbReference>
<dbReference type="Ensembl" id="ENST00000376704.3">
    <molecule id="Q9UDY6-2"/>
    <property type="protein sequence ID" value="ENSP00000365894.3"/>
    <property type="gene ID" value="ENSG00000204613.11"/>
</dbReference>
<dbReference type="Ensembl" id="ENST00000413055.2">
    <molecule id="Q9UDY6-2"/>
    <property type="protein sequence ID" value="ENSP00000393787.2"/>
    <property type="gene ID" value="ENSG00000227472.8"/>
</dbReference>
<dbReference type="Ensembl" id="ENST00000416714.2">
    <molecule id="Q9UDY6-2"/>
    <property type="protein sequence ID" value="ENSP00000405578.2"/>
    <property type="gene ID" value="ENSG00000229381.8"/>
</dbReference>
<dbReference type="Ensembl" id="ENST00000417411.6">
    <molecule id="Q9UDY6-2"/>
    <property type="protein sequence ID" value="ENSP00000393576.2"/>
    <property type="gene ID" value="ENSG00000237192.8"/>
</dbReference>
<dbReference type="Ensembl" id="ENST00000426996.6">
    <molecule id="Q9UDY6-1"/>
    <property type="protein sequence ID" value="ENSP00000397440.2"/>
    <property type="gene ID" value="ENSG00000227472.8"/>
</dbReference>
<dbReference type="Ensembl" id="ENST00000428611.6">
    <molecule id="Q9UDY6-2"/>
    <property type="protein sequence ID" value="ENSP00000412370.2"/>
    <property type="gene ID" value="ENSG00000229346.8"/>
</dbReference>
<dbReference type="Ensembl" id="ENST00000431258.6">
    <molecule id="Q9UDY6-1"/>
    <property type="protein sequence ID" value="ENSP00000395598.2"/>
    <property type="gene ID" value="ENSG00000235025.8"/>
</dbReference>
<dbReference type="Ensembl" id="ENST00000446013.2">
    <molecule id="Q9UDY6-2"/>
    <property type="protein sequence ID" value="ENSP00000398404.2"/>
    <property type="gene ID" value="ENSG00000237703.8"/>
</dbReference>
<dbReference type="Ensembl" id="ENST00000447465.2">
    <molecule id="Q9UDY6-2"/>
    <property type="protein sequence ID" value="ENSP00000393976.2"/>
    <property type="gene ID" value="ENSG00000235025.8"/>
</dbReference>
<dbReference type="Ensembl" id="ENST00000448645.2">
    <molecule id="Q9UDY6-1"/>
    <property type="protein sequence ID" value="ENSP00000399446.2"/>
    <property type="gene ID" value="ENSG00000229346.8"/>
</dbReference>
<dbReference type="Ensembl" id="ENST00000449208.6">
    <molecule id="Q9UDY6-1"/>
    <property type="protein sequence ID" value="ENSP00000390497.2"/>
    <property type="gene ID" value="ENSG00000237703.8"/>
</dbReference>
<dbReference type="Ensembl" id="ENST00000449742.7">
    <molecule id="Q9UDY6-1"/>
    <property type="protein sequence ID" value="ENSP00000397073.2"/>
    <property type="gene ID" value="ENSG00000204613.11"/>
</dbReference>
<dbReference type="Ensembl" id="ENST00000451727.2">
    <molecule id="Q9UDY6-1"/>
    <property type="protein sequence ID" value="ENSP00000391445.2"/>
    <property type="gene ID" value="ENSG00000237192.8"/>
</dbReference>
<dbReference type="Ensembl" id="ENST00000456988.6">
    <molecule id="Q9UDY6-1"/>
    <property type="protein sequence ID" value="ENSP00000410849.2"/>
    <property type="gene ID" value="ENSG00000229381.8"/>
</dbReference>
<dbReference type="GeneID" id="10107"/>
<dbReference type="KEGG" id="hsa:10107"/>
<dbReference type="MANE-Select" id="ENST00000449742.7">
    <property type="protein sequence ID" value="ENSP00000397073.2"/>
    <property type="RefSeq nucleotide sequence ID" value="NM_006778.4"/>
    <property type="RefSeq protein sequence ID" value="NP_006769.2"/>
</dbReference>
<dbReference type="UCSC" id="uc003npn.3">
    <molecule id="Q9UDY6-1"/>
    <property type="organism name" value="human"/>
</dbReference>
<dbReference type="AGR" id="HGNC:10072"/>
<dbReference type="CTD" id="10107"/>
<dbReference type="DisGeNET" id="10107"/>
<dbReference type="GeneCards" id="TRIM10"/>
<dbReference type="HGNC" id="HGNC:10072">
    <property type="gene designation" value="TRIM10"/>
</dbReference>
<dbReference type="HPA" id="ENSG00000204613">
    <property type="expression patterns" value="Tissue enhanced (bone marrow, kidney, liver)"/>
</dbReference>
<dbReference type="MIM" id="605701">
    <property type="type" value="gene"/>
</dbReference>
<dbReference type="neXtProt" id="NX_Q9UDY6"/>
<dbReference type="OpenTargets" id="ENSG00000204613"/>
<dbReference type="PharmGKB" id="PA35536"/>
<dbReference type="VEuPathDB" id="HostDB:ENSG00000204613"/>
<dbReference type="eggNOG" id="KOG2177">
    <property type="taxonomic scope" value="Eukaryota"/>
</dbReference>
<dbReference type="GeneTree" id="ENSGT00940000161525"/>
<dbReference type="HOGENOM" id="CLU_013137_0_3_1"/>
<dbReference type="InParanoid" id="Q9UDY6"/>
<dbReference type="OMA" id="LRCETRK"/>
<dbReference type="OrthoDB" id="9410880at2759"/>
<dbReference type="PAN-GO" id="Q9UDY6">
    <property type="GO annotations" value="5 GO annotations based on evolutionary models"/>
</dbReference>
<dbReference type="PhylomeDB" id="Q9UDY6"/>
<dbReference type="TreeFam" id="TF342569"/>
<dbReference type="PathwayCommons" id="Q9UDY6"/>
<dbReference type="Reactome" id="R-HSA-877300">
    <property type="pathway name" value="Interferon gamma signaling"/>
</dbReference>
<dbReference type="SignaLink" id="Q9UDY6"/>
<dbReference type="SIGNOR" id="Q9UDY6"/>
<dbReference type="BioGRID-ORCS" id="10107">
    <property type="hits" value="11 hits in 1185 CRISPR screens"/>
</dbReference>
<dbReference type="ChiTaRS" id="TRIM10">
    <property type="organism name" value="human"/>
</dbReference>
<dbReference type="GenomeRNAi" id="10107"/>
<dbReference type="Pharos" id="Q9UDY6">
    <property type="development level" value="Tbio"/>
</dbReference>
<dbReference type="PRO" id="PR:Q9UDY6"/>
<dbReference type="Proteomes" id="UP000005640">
    <property type="component" value="Chromosome 6"/>
</dbReference>
<dbReference type="RNAct" id="Q9UDY6">
    <property type="molecule type" value="protein"/>
</dbReference>
<dbReference type="Bgee" id="ENSG00000137394">
    <property type="expression patterns" value="Expressed in liver"/>
</dbReference>
<dbReference type="ExpressionAtlas" id="Q9UDY6">
    <property type="expression patterns" value="baseline and differential"/>
</dbReference>
<dbReference type="GO" id="GO:0005737">
    <property type="term" value="C:cytoplasm"/>
    <property type="evidence" value="ECO:0000250"/>
    <property type="project" value="UniProtKB"/>
</dbReference>
<dbReference type="GO" id="GO:0061630">
    <property type="term" value="F:ubiquitin protein ligase activity"/>
    <property type="evidence" value="ECO:0000318"/>
    <property type="project" value="GO_Central"/>
</dbReference>
<dbReference type="GO" id="GO:0008270">
    <property type="term" value="F:zinc ion binding"/>
    <property type="evidence" value="ECO:0007669"/>
    <property type="project" value="UniProtKB-KW"/>
</dbReference>
<dbReference type="GO" id="GO:0030218">
    <property type="term" value="P:erythrocyte differentiation"/>
    <property type="evidence" value="ECO:0007669"/>
    <property type="project" value="Ensembl"/>
</dbReference>
<dbReference type="GO" id="GO:0046597">
    <property type="term" value="P:host-mediated suppression of symbiont invasion"/>
    <property type="evidence" value="ECO:0007669"/>
    <property type="project" value="Ensembl"/>
</dbReference>
<dbReference type="GO" id="GO:0045087">
    <property type="term" value="P:innate immune response"/>
    <property type="evidence" value="ECO:0000318"/>
    <property type="project" value="GO_Central"/>
</dbReference>
<dbReference type="CDD" id="cd16593">
    <property type="entry name" value="RING-HC_TRIM10_C-IV"/>
    <property type="match status" value="1"/>
</dbReference>
<dbReference type="CDD" id="cd15827">
    <property type="entry name" value="SPRY_PRY_TRIM10"/>
    <property type="match status" value="1"/>
</dbReference>
<dbReference type="FunFam" id="3.30.40.10:FF:000248">
    <property type="entry name" value="E3 ubiquitin-protein ligase TRIM68"/>
    <property type="match status" value="1"/>
</dbReference>
<dbReference type="FunFam" id="2.60.120.920:FF:000044">
    <property type="entry name" value="Tripartite motif-containing protein 10"/>
    <property type="match status" value="1"/>
</dbReference>
<dbReference type="Gene3D" id="2.60.120.920">
    <property type="match status" value="1"/>
</dbReference>
<dbReference type="Gene3D" id="3.30.160.60">
    <property type="entry name" value="Classic Zinc Finger"/>
    <property type="match status" value="1"/>
</dbReference>
<dbReference type="Gene3D" id="3.30.40.10">
    <property type="entry name" value="Zinc/RING finger domain, C3HC4 (zinc finger)"/>
    <property type="match status" value="1"/>
</dbReference>
<dbReference type="InterPro" id="IPR001870">
    <property type="entry name" value="B30.2/SPRY"/>
</dbReference>
<dbReference type="InterPro" id="IPR043136">
    <property type="entry name" value="B30.2/SPRY_sf"/>
</dbReference>
<dbReference type="InterPro" id="IPR003879">
    <property type="entry name" value="Butyrophylin_SPRY"/>
</dbReference>
<dbReference type="InterPro" id="IPR013320">
    <property type="entry name" value="ConA-like_dom_sf"/>
</dbReference>
<dbReference type="InterPro" id="IPR006574">
    <property type="entry name" value="PRY"/>
</dbReference>
<dbReference type="InterPro" id="IPR003877">
    <property type="entry name" value="SPRY_dom"/>
</dbReference>
<dbReference type="InterPro" id="IPR050143">
    <property type="entry name" value="TRIM/RBCC"/>
</dbReference>
<dbReference type="InterPro" id="IPR042784">
    <property type="entry name" value="TRIM10_RING-HC"/>
</dbReference>
<dbReference type="InterPro" id="IPR000315">
    <property type="entry name" value="Znf_B-box"/>
</dbReference>
<dbReference type="InterPro" id="IPR018957">
    <property type="entry name" value="Znf_C3HC4_RING-type"/>
</dbReference>
<dbReference type="InterPro" id="IPR001841">
    <property type="entry name" value="Znf_RING"/>
</dbReference>
<dbReference type="InterPro" id="IPR013083">
    <property type="entry name" value="Znf_RING/FYVE/PHD"/>
</dbReference>
<dbReference type="InterPro" id="IPR017907">
    <property type="entry name" value="Znf_RING_CS"/>
</dbReference>
<dbReference type="PANTHER" id="PTHR24103">
    <property type="entry name" value="E3 UBIQUITIN-PROTEIN LIGASE TRIM"/>
    <property type="match status" value="1"/>
</dbReference>
<dbReference type="Pfam" id="PF13765">
    <property type="entry name" value="PRY"/>
    <property type="match status" value="1"/>
</dbReference>
<dbReference type="Pfam" id="PF00622">
    <property type="entry name" value="SPRY"/>
    <property type="match status" value="1"/>
</dbReference>
<dbReference type="Pfam" id="PF00643">
    <property type="entry name" value="zf-B_box"/>
    <property type="match status" value="1"/>
</dbReference>
<dbReference type="Pfam" id="PF00097">
    <property type="entry name" value="zf-C3HC4"/>
    <property type="match status" value="1"/>
</dbReference>
<dbReference type="PRINTS" id="PR01407">
    <property type="entry name" value="BUTYPHLNCDUF"/>
</dbReference>
<dbReference type="SMART" id="SM00336">
    <property type="entry name" value="BBOX"/>
    <property type="match status" value="1"/>
</dbReference>
<dbReference type="SMART" id="SM00589">
    <property type="entry name" value="PRY"/>
    <property type="match status" value="1"/>
</dbReference>
<dbReference type="SMART" id="SM00184">
    <property type="entry name" value="RING"/>
    <property type="match status" value="1"/>
</dbReference>
<dbReference type="SMART" id="SM00449">
    <property type="entry name" value="SPRY"/>
    <property type="match status" value="1"/>
</dbReference>
<dbReference type="SUPFAM" id="SSF57845">
    <property type="entry name" value="B-box zinc-binding domain"/>
    <property type="match status" value="1"/>
</dbReference>
<dbReference type="SUPFAM" id="SSF49899">
    <property type="entry name" value="Concanavalin A-like lectins/glucanases"/>
    <property type="match status" value="1"/>
</dbReference>
<dbReference type="SUPFAM" id="SSF57850">
    <property type="entry name" value="RING/U-box"/>
    <property type="match status" value="1"/>
</dbReference>
<dbReference type="PROSITE" id="PS50188">
    <property type="entry name" value="B302_SPRY"/>
    <property type="match status" value="1"/>
</dbReference>
<dbReference type="PROSITE" id="PS50119">
    <property type="entry name" value="ZF_BBOX"/>
    <property type="match status" value="1"/>
</dbReference>
<dbReference type="PROSITE" id="PS00518">
    <property type="entry name" value="ZF_RING_1"/>
    <property type="match status" value="1"/>
</dbReference>
<dbReference type="PROSITE" id="PS50089">
    <property type="entry name" value="ZF_RING_2"/>
    <property type="match status" value="1"/>
</dbReference>
<reference key="1">
    <citation type="journal article" date="1997" name="Immunogenetics">
        <title>Cloning, structural analysis, and mapping of the B30 and B7 multigenic families to the major histocompatibility complex (MHC) and other chromosomal regions.</title>
        <authorList>
            <person name="Henry J."/>
            <person name="Ribouchon M.-T."/>
            <person name="Depetris D."/>
            <person name="Mattei M.-G."/>
            <person name="Offer C."/>
            <person name="Tazi-Ahnini R."/>
            <person name="Pontarotti P."/>
        </authorList>
    </citation>
    <scope>NUCLEOTIDE SEQUENCE [GENOMIC DNA] (ISOFORM ALPHA)</scope>
    <source>
        <tissue>Testis</tissue>
    </source>
</reference>
<reference key="2">
    <citation type="journal article" date="2001" name="EMBO J.">
        <title>The tripartite motif family identifies cell compartments.</title>
        <authorList>
            <person name="Reymond A."/>
            <person name="Meroni G."/>
            <person name="Fantozzi A."/>
            <person name="Merla G."/>
            <person name="Cairo S."/>
            <person name="Luzi L."/>
            <person name="Riganelli D."/>
            <person name="Zanaria E."/>
            <person name="Messali S."/>
            <person name="Cainarca S."/>
            <person name="Guffanti A."/>
            <person name="Minucci S."/>
            <person name="Pelicci P.G."/>
            <person name="Ballabio A."/>
        </authorList>
    </citation>
    <scope>NUCLEOTIDE SEQUENCE [MRNA] (ISOFORMS ALPHA AND BETA)</scope>
    <scope>SUBCELLULAR LOCATION</scope>
</reference>
<reference key="3">
    <citation type="journal article" date="2006" name="Genetics">
        <title>Rapid evolution of major histocompatibility complex class I genes in primates generates new disease alleles in humans via hitchhiking diversity.</title>
        <authorList>
            <person name="Shiina T."/>
            <person name="Ota M."/>
            <person name="Shimizu S."/>
            <person name="Katsuyama Y."/>
            <person name="Hashimoto N."/>
            <person name="Takasu M."/>
            <person name="Anzai T."/>
            <person name="Kulski J.K."/>
            <person name="Kikkawa E."/>
            <person name="Naruse T."/>
            <person name="Kimura N."/>
            <person name="Yanagiya K."/>
            <person name="Watanabe A."/>
            <person name="Hosomichi K."/>
            <person name="Kohara S."/>
            <person name="Iwamoto C."/>
            <person name="Umehara Y."/>
            <person name="Meyer A."/>
            <person name="Wanner V."/>
            <person name="Sano K."/>
            <person name="Macquin C."/>
            <person name="Ikeo K."/>
            <person name="Tokunaga K."/>
            <person name="Gojobori T."/>
            <person name="Inoko H."/>
            <person name="Bahram S."/>
        </authorList>
    </citation>
    <scope>NUCLEOTIDE SEQUENCE [GENOMIC DNA]</scope>
    <source>
        <tissue>Peripheral blood leukocyte</tissue>
    </source>
</reference>
<reference key="4">
    <citation type="submission" date="1999-09" db="EMBL/GenBank/DDBJ databases">
        <title>Homo sapiens 2,229,817bp genomic DNA of 6p21.3 HLA class I region.</title>
        <authorList>
            <person name="Shiina S."/>
            <person name="Tamiya G."/>
            <person name="Oka A."/>
            <person name="Inoko H."/>
        </authorList>
    </citation>
    <scope>NUCLEOTIDE SEQUENCE [LARGE SCALE GENOMIC DNA]</scope>
</reference>
<reference key="5">
    <citation type="submission" date="2002-07" db="EMBL/GenBank/DDBJ databases">
        <title>Genome diversity in HLA: a new strategy for detection of genetic polymorphisms in expressed genes within the HLA class III and class I regions.</title>
        <authorList>
            <person name="Shiina T."/>
            <person name="Ota M."/>
            <person name="Katsuyama Y."/>
            <person name="Hashimoto N."/>
            <person name="Inoko H."/>
        </authorList>
    </citation>
    <scope>NUCLEOTIDE SEQUENCE [LARGE SCALE GENOMIC DNA]</scope>
</reference>
<reference key="6">
    <citation type="journal article" date="2003" name="Nature">
        <title>The DNA sequence and analysis of human chromosome 6.</title>
        <authorList>
            <person name="Mungall A.J."/>
            <person name="Palmer S.A."/>
            <person name="Sims S.K."/>
            <person name="Edwards C.A."/>
            <person name="Ashurst J.L."/>
            <person name="Wilming L."/>
            <person name="Jones M.C."/>
            <person name="Horton R."/>
            <person name="Hunt S.E."/>
            <person name="Scott C.E."/>
            <person name="Gilbert J.G.R."/>
            <person name="Clamp M.E."/>
            <person name="Bethel G."/>
            <person name="Milne S."/>
            <person name="Ainscough R."/>
            <person name="Almeida J.P."/>
            <person name="Ambrose K.D."/>
            <person name="Andrews T.D."/>
            <person name="Ashwell R.I.S."/>
            <person name="Babbage A.K."/>
            <person name="Bagguley C.L."/>
            <person name="Bailey J."/>
            <person name="Banerjee R."/>
            <person name="Barker D.J."/>
            <person name="Barlow K.F."/>
            <person name="Bates K."/>
            <person name="Beare D.M."/>
            <person name="Beasley H."/>
            <person name="Beasley O."/>
            <person name="Bird C.P."/>
            <person name="Blakey S.E."/>
            <person name="Bray-Allen S."/>
            <person name="Brook J."/>
            <person name="Brown A.J."/>
            <person name="Brown J.Y."/>
            <person name="Burford D.C."/>
            <person name="Burrill W."/>
            <person name="Burton J."/>
            <person name="Carder C."/>
            <person name="Carter N.P."/>
            <person name="Chapman J.C."/>
            <person name="Clark S.Y."/>
            <person name="Clark G."/>
            <person name="Clee C.M."/>
            <person name="Clegg S."/>
            <person name="Cobley V."/>
            <person name="Collier R.E."/>
            <person name="Collins J.E."/>
            <person name="Colman L.K."/>
            <person name="Corby N.R."/>
            <person name="Coville G.J."/>
            <person name="Culley K.M."/>
            <person name="Dhami P."/>
            <person name="Davies J."/>
            <person name="Dunn M."/>
            <person name="Earthrowl M.E."/>
            <person name="Ellington A.E."/>
            <person name="Evans K.A."/>
            <person name="Faulkner L."/>
            <person name="Francis M.D."/>
            <person name="Frankish A."/>
            <person name="Frankland J."/>
            <person name="French L."/>
            <person name="Garner P."/>
            <person name="Garnett J."/>
            <person name="Ghori M.J."/>
            <person name="Gilby L.M."/>
            <person name="Gillson C.J."/>
            <person name="Glithero R.J."/>
            <person name="Grafham D.V."/>
            <person name="Grant M."/>
            <person name="Gribble S."/>
            <person name="Griffiths C."/>
            <person name="Griffiths M.N.D."/>
            <person name="Hall R."/>
            <person name="Halls K.S."/>
            <person name="Hammond S."/>
            <person name="Harley J.L."/>
            <person name="Hart E.A."/>
            <person name="Heath P.D."/>
            <person name="Heathcott R."/>
            <person name="Holmes S.J."/>
            <person name="Howden P.J."/>
            <person name="Howe K.L."/>
            <person name="Howell G.R."/>
            <person name="Huckle E."/>
            <person name="Humphray S.J."/>
            <person name="Humphries M.D."/>
            <person name="Hunt A.R."/>
            <person name="Johnson C.M."/>
            <person name="Joy A.A."/>
            <person name="Kay M."/>
            <person name="Keenan S.J."/>
            <person name="Kimberley A.M."/>
            <person name="King A."/>
            <person name="Laird G.K."/>
            <person name="Langford C."/>
            <person name="Lawlor S."/>
            <person name="Leongamornlert D.A."/>
            <person name="Leversha M."/>
            <person name="Lloyd C.R."/>
            <person name="Lloyd D.M."/>
            <person name="Loveland J.E."/>
            <person name="Lovell J."/>
            <person name="Martin S."/>
            <person name="Mashreghi-Mohammadi M."/>
            <person name="Maslen G.L."/>
            <person name="Matthews L."/>
            <person name="McCann O.T."/>
            <person name="McLaren S.J."/>
            <person name="McLay K."/>
            <person name="McMurray A."/>
            <person name="Moore M.J.F."/>
            <person name="Mullikin J.C."/>
            <person name="Niblett D."/>
            <person name="Nickerson T."/>
            <person name="Novik K.L."/>
            <person name="Oliver K."/>
            <person name="Overton-Larty E.K."/>
            <person name="Parker A."/>
            <person name="Patel R."/>
            <person name="Pearce A.V."/>
            <person name="Peck A.I."/>
            <person name="Phillimore B.J.C.T."/>
            <person name="Phillips S."/>
            <person name="Plumb R.W."/>
            <person name="Porter K.M."/>
            <person name="Ramsey Y."/>
            <person name="Ranby S.A."/>
            <person name="Rice C.M."/>
            <person name="Ross M.T."/>
            <person name="Searle S.M."/>
            <person name="Sehra H.K."/>
            <person name="Sheridan E."/>
            <person name="Skuce C.D."/>
            <person name="Smith S."/>
            <person name="Smith M."/>
            <person name="Spraggon L."/>
            <person name="Squares S.L."/>
            <person name="Steward C.A."/>
            <person name="Sycamore N."/>
            <person name="Tamlyn-Hall G."/>
            <person name="Tester J."/>
            <person name="Theaker A.J."/>
            <person name="Thomas D.W."/>
            <person name="Thorpe A."/>
            <person name="Tracey A."/>
            <person name="Tromans A."/>
            <person name="Tubby B."/>
            <person name="Wall M."/>
            <person name="Wallis J.M."/>
            <person name="West A.P."/>
            <person name="White S.S."/>
            <person name="Whitehead S.L."/>
            <person name="Whittaker H."/>
            <person name="Wild A."/>
            <person name="Willey D.J."/>
            <person name="Wilmer T.E."/>
            <person name="Wood J.M."/>
            <person name="Wray P.W."/>
            <person name="Wyatt J.C."/>
            <person name="Young L."/>
            <person name="Younger R.M."/>
            <person name="Bentley D.R."/>
            <person name="Coulson A."/>
            <person name="Durbin R.M."/>
            <person name="Hubbard T."/>
            <person name="Sulston J.E."/>
            <person name="Dunham I."/>
            <person name="Rogers J."/>
            <person name="Beck S."/>
        </authorList>
    </citation>
    <scope>NUCLEOTIDE SEQUENCE [LARGE SCALE GENOMIC DNA]</scope>
</reference>
<reference key="7">
    <citation type="submission" date="2005-07" db="EMBL/GenBank/DDBJ databases">
        <authorList>
            <person name="Mural R.J."/>
            <person name="Istrail S."/>
            <person name="Sutton G."/>
            <person name="Florea L."/>
            <person name="Halpern A.L."/>
            <person name="Mobarry C.M."/>
            <person name="Lippert R."/>
            <person name="Walenz B."/>
            <person name="Shatkay H."/>
            <person name="Dew I."/>
            <person name="Miller J.R."/>
            <person name="Flanigan M.J."/>
            <person name="Edwards N.J."/>
            <person name="Bolanos R."/>
            <person name="Fasulo D."/>
            <person name="Halldorsson B.V."/>
            <person name="Hannenhalli S."/>
            <person name="Turner R."/>
            <person name="Yooseph S."/>
            <person name="Lu F."/>
            <person name="Nusskern D.R."/>
            <person name="Shue B.C."/>
            <person name="Zheng X.H."/>
            <person name="Zhong F."/>
            <person name="Delcher A.L."/>
            <person name="Huson D.H."/>
            <person name="Kravitz S.A."/>
            <person name="Mouchard L."/>
            <person name="Reinert K."/>
            <person name="Remington K.A."/>
            <person name="Clark A.G."/>
            <person name="Waterman M.S."/>
            <person name="Eichler E.E."/>
            <person name="Adams M.D."/>
            <person name="Hunkapiller M.W."/>
            <person name="Myers E.W."/>
            <person name="Venter J.C."/>
        </authorList>
    </citation>
    <scope>NUCLEOTIDE SEQUENCE [LARGE SCALE GENOMIC DNA]</scope>
</reference>
<reference key="8">
    <citation type="journal article" date="2004" name="Genome Res.">
        <title>The status, quality, and expansion of the NIH full-length cDNA project: the Mammalian Gene Collection (MGC).</title>
        <authorList>
            <consortium name="The MGC Project Team"/>
        </authorList>
    </citation>
    <scope>NUCLEOTIDE SEQUENCE [LARGE SCALE MRNA] (ISOFORM BETA)</scope>
    <source>
        <tissue>Liver</tissue>
    </source>
</reference>
<reference key="9">
    <citation type="journal article" date="2021" name="Eur. J. Immunol.">
        <title>TRIM10 binds to IFN-alpha/beta receptor 1 to negatively regulate type I IFN signal transduction.</title>
        <authorList>
            <person name="Guo M."/>
            <person name="Cao W."/>
            <person name="Chen S."/>
            <person name="Tian R."/>
            <person name="Wang L."/>
            <person name="Liu Q."/>
            <person name="Zhang L."/>
            <person name="Wang Z."/>
            <person name="Zhao M."/>
            <person name="Lu Q."/>
            <person name="Zhu H."/>
        </authorList>
    </citation>
    <scope>FUNCTION</scope>
    <scope>INTERACTION WITH IFNAR1</scope>
    <scope>SUBCELLULAR LOCATION</scope>
</reference>